<organism>
    <name type="scientific">Salinibacter ruber (strain DSM 13855 / M31)</name>
    <dbReference type="NCBI Taxonomy" id="309807"/>
    <lineage>
        <taxon>Bacteria</taxon>
        <taxon>Pseudomonadati</taxon>
        <taxon>Rhodothermota</taxon>
        <taxon>Rhodothermia</taxon>
        <taxon>Rhodothermales</taxon>
        <taxon>Salinibacteraceae</taxon>
        <taxon>Salinibacter</taxon>
    </lineage>
</organism>
<accession>Q2S2N8</accession>
<reference key="1">
    <citation type="journal article" date="2005" name="Proc. Natl. Acad. Sci. U.S.A.">
        <title>The genome of Salinibacter ruber: convergence and gene exchange among hyperhalophilic bacteria and archaea.</title>
        <authorList>
            <person name="Mongodin E.F."/>
            <person name="Nelson K.E."/>
            <person name="Daugherty S."/>
            <person name="DeBoy R.T."/>
            <person name="Wister J."/>
            <person name="Khouri H."/>
            <person name="Weidman J."/>
            <person name="Walsh D.A."/>
            <person name="Papke R.T."/>
            <person name="Sanchez Perez G."/>
            <person name="Sharma A.K."/>
            <person name="Nesbo C.L."/>
            <person name="MacLeod D."/>
            <person name="Bapteste E."/>
            <person name="Doolittle W.F."/>
            <person name="Charlebois R.L."/>
            <person name="Legault B."/>
            <person name="Rodriguez-Valera F."/>
        </authorList>
    </citation>
    <scope>NUCLEOTIDE SEQUENCE [LARGE SCALE GENOMIC DNA]</scope>
    <source>
        <strain>DSM 13855 / CECT 5946 / M31</strain>
    </source>
</reference>
<comment type="similarity">
    <text evidence="1">Belongs to the bacterial ribosomal protein bL27 family.</text>
</comment>
<dbReference type="EMBL" id="CP000159">
    <property type="protein sequence ID" value="ABC44011.1"/>
    <property type="molecule type" value="Genomic_DNA"/>
</dbReference>
<dbReference type="RefSeq" id="WP_011404169.1">
    <property type="nucleotide sequence ID" value="NC_007677.1"/>
</dbReference>
<dbReference type="RefSeq" id="YP_445543.1">
    <property type="nucleotide sequence ID" value="NC_007677.1"/>
</dbReference>
<dbReference type="SMR" id="Q2S2N8"/>
<dbReference type="STRING" id="309807.SRU_1419"/>
<dbReference type="EnsemblBacteria" id="ABC44011">
    <property type="protein sequence ID" value="ABC44011"/>
    <property type="gene ID" value="SRU_1419"/>
</dbReference>
<dbReference type="GeneID" id="83728329"/>
<dbReference type="KEGG" id="sru:SRU_1419"/>
<dbReference type="PATRIC" id="fig|309807.25.peg.1474"/>
<dbReference type="eggNOG" id="COG0211">
    <property type="taxonomic scope" value="Bacteria"/>
</dbReference>
<dbReference type="HOGENOM" id="CLU_095424_4_0_10"/>
<dbReference type="OrthoDB" id="9803474at2"/>
<dbReference type="Proteomes" id="UP000008674">
    <property type="component" value="Chromosome"/>
</dbReference>
<dbReference type="GO" id="GO:0022625">
    <property type="term" value="C:cytosolic large ribosomal subunit"/>
    <property type="evidence" value="ECO:0007669"/>
    <property type="project" value="TreeGrafter"/>
</dbReference>
<dbReference type="GO" id="GO:0003735">
    <property type="term" value="F:structural constituent of ribosome"/>
    <property type="evidence" value="ECO:0007669"/>
    <property type="project" value="InterPro"/>
</dbReference>
<dbReference type="GO" id="GO:0006412">
    <property type="term" value="P:translation"/>
    <property type="evidence" value="ECO:0007669"/>
    <property type="project" value="UniProtKB-UniRule"/>
</dbReference>
<dbReference type="FunFam" id="2.40.50.100:FF:000020">
    <property type="entry name" value="50S ribosomal protein L27"/>
    <property type="match status" value="1"/>
</dbReference>
<dbReference type="Gene3D" id="2.40.50.100">
    <property type="match status" value="1"/>
</dbReference>
<dbReference type="HAMAP" id="MF_00539">
    <property type="entry name" value="Ribosomal_bL27"/>
    <property type="match status" value="1"/>
</dbReference>
<dbReference type="InterPro" id="IPR001684">
    <property type="entry name" value="Ribosomal_bL27"/>
</dbReference>
<dbReference type="InterPro" id="IPR018261">
    <property type="entry name" value="Ribosomal_bL27_CS"/>
</dbReference>
<dbReference type="NCBIfam" id="TIGR00062">
    <property type="entry name" value="L27"/>
    <property type="match status" value="1"/>
</dbReference>
<dbReference type="PANTHER" id="PTHR15893:SF0">
    <property type="entry name" value="LARGE RIBOSOMAL SUBUNIT PROTEIN BL27M"/>
    <property type="match status" value="1"/>
</dbReference>
<dbReference type="PANTHER" id="PTHR15893">
    <property type="entry name" value="RIBOSOMAL PROTEIN L27"/>
    <property type="match status" value="1"/>
</dbReference>
<dbReference type="Pfam" id="PF01016">
    <property type="entry name" value="Ribosomal_L27"/>
    <property type="match status" value="1"/>
</dbReference>
<dbReference type="PRINTS" id="PR00063">
    <property type="entry name" value="RIBOSOMALL27"/>
</dbReference>
<dbReference type="SUPFAM" id="SSF110324">
    <property type="entry name" value="Ribosomal L27 protein-like"/>
    <property type="match status" value="1"/>
</dbReference>
<dbReference type="PROSITE" id="PS00831">
    <property type="entry name" value="RIBOSOMAL_L27"/>
    <property type="match status" value="1"/>
</dbReference>
<keyword id="KW-1185">Reference proteome</keyword>
<keyword id="KW-0687">Ribonucleoprotein</keyword>
<keyword id="KW-0689">Ribosomal protein</keyword>
<proteinExistence type="inferred from homology"/>
<name>RL27_SALRD</name>
<protein>
    <recommendedName>
        <fullName evidence="1">Large ribosomal subunit protein bL27</fullName>
    </recommendedName>
    <alternativeName>
        <fullName evidence="3">50S ribosomal protein L27</fullName>
    </alternativeName>
</protein>
<feature type="chain" id="PRO_1000017595" description="Large ribosomal subunit protein bL27">
    <location>
        <begin position="1"/>
        <end position="86"/>
    </location>
</feature>
<feature type="region of interest" description="Disordered" evidence="2">
    <location>
        <begin position="1"/>
        <end position="24"/>
    </location>
</feature>
<feature type="compositionally biased region" description="Polar residues" evidence="2">
    <location>
        <begin position="9"/>
        <end position="19"/>
    </location>
</feature>
<gene>
    <name evidence="1" type="primary">rpmA</name>
    <name type="ordered locus">SRU_1419</name>
</gene>
<sequence>MAHKKAMGSTENTRDSNPSYLGVKSYGGEHVHAGSIIVRQRGTKFHPGHNVGRGSDDTLFAKDHGVVKFARSGGDRKYVHVVPEEA</sequence>
<evidence type="ECO:0000255" key="1">
    <source>
        <dbReference type="HAMAP-Rule" id="MF_00539"/>
    </source>
</evidence>
<evidence type="ECO:0000256" key="2">
    <source>
        <dbReference type="SAM" id="MobiDB-lite"/>
    </source>
</evidence>
<evidence type="ECO:0000305" key="3"/>